<name>HEMH_ECO8A</name>
<feature type="chain" id="PRO_1000119608" description="Ferrochelatase">
    <location>
        <begin position="1"/>
        <end position="320"/>
    </location>
</feature>
<feature type="binding site" evidence="1">
    <location>
        <position position="194"/>
    </location>
    <ligand>
        <name>Fe cation</name>
        <dbReference type="ChEBI" id="CHEBI:24875"/>
    </ligand>
</feature>
<feature type="binding site" evidence="1">
    <location>
        <position position="275"/>
    </location>
    <ligand>
        <name>Fe cation</name>
        <dbReference type="ChEBI" id="CHEBI:24875"/>
    </ligand>
</feature>
<protein>
    <recommendedName>
        <fullName evidence="1">Ferrochelatase</fullName>
        <ecNumber evidence="1">4.98.1.1</ecNumber>
    </recommendedName>
    <alternativeName>
        <fullName evidence="1">Heme synthase</fullName>
    </alternativeName>
    <alternativeName>
        <fullName evidence="1">Protoheme ferro-lyase</fullName>
    </alternativeName>
</protein>
<accession>B7M3W7</accession>
<reference key="1">
    <citation type="journal article" date="2009" name="PLoS Genet.">
        <title>Organised genome dynamics in the Escherichia coli species results in highly diverse adaptive paths.</title>
        <authorList>
            <person name="Touchon M."/>
            <person name="Hoede C."/>
            <person name="Tenaillon O."/>
            <person name="Barbe V."/>
            <person name="Baeriswyl S."/>
            <person name="Bidet P."/>
            <person name="Bingen E."/>
            <person name="Bonacorsi S."/>
            <person name="Bouchier C."/>
            <person name="Bouvet O."/>
            <person name="Calteau A."/>
            <person name="Chiapello H."/>
            <person name="Clermont O."/>
            <person name="Cruveiller S."/>
            <person name="Danchin A."/>
            <person name="Diard M."/>
            <person name="Dossat C."/>
            <person name="Karoui M.E."/>
            <person name="Frapy E."/>
            <person name="Garry L."/>
            <person name="Ghigo J.M."/>
            <person name="Gilles A.M."/>
            <person name="Johnson J."/>
            <person name="Le Bouguenec C."/>
            <person name="Lescat M."/>
            <person name="Mangenot S."/>
            <person name="Martinez-Jehanne V."/>
            <person name="Matic I."/>
            <person name="Nassif X."/>
            <person name="Oztas S."/>
            <person name="Petit M.A."/>
            <person name="Pichon C."/>
            <person name="Rouy Z."/>
            <person name="Ruf C.S."/>
            <person name="Schneider D."/>
            <person name="Tourret J."/>
            <person name="Vacherie B."/>
            <person name="Vallenet D."/>
            <person name="Medigue C."/>
            <person name="Rocha E.P.C."/>
            <person name="Denamur E."/>
        </authorList>
    </citation>
    <scope>NUCLEOTIDE SEQUENCE [LARGE SCALE GENOMIC DNA]</scope>
    <source>
        <strain>IAI1</strain>
    </source>
</reference>
<comment type="function">
    <text evidence="1">Catalyzes the ferrous insertion into protoporphyrin IX.</text>
</comment>
<comment type="catalytic activity">
    <reaction evidence="1">
        <text>heme b + 2 H(+) = protoporphyrin IX + Fe(2+)</text>
        <dbReference type="Rhea" id="RHEA:22584"/>
        <dbReference type="ChEBI" id="CHEBI:15378"/>
        <dbReference type="ChEBI" id="CHEBI:29033"/>
        <dbReference type="ChEBI" id="CHEBI:57306"/>
        <dbReference type="ChEBI" id="CHEBI:60344"/>
        <dbReference type="EC" id="4.98.1.1"/>
    </reaction>
</comment>
<comment type="pathway">
    <text evidence="1">Porphyrin-containing compound metabolism; protoheme biosynthesis; protoheme from protoporphyrin-IX: step 1/1.</text>
</comment>
<comment type="subunit">
    <text evidence="1">Monomer.</text>
</comment>
<comment type="subcellular location">
    <subcellularLocation>
        <location evidence="1">Cytoplasm</location>
    </subcellularLocation>
</comment>
<comment type="similarity">
    <text evidence="1">Belongs to the ferrochelatase family.</text>
</comment>
<gene>
    <name evidence="1" type="primary">hemH</name>
    <name type="ordered locus">ECIAI1_0478</name>
</gene>
<keyword id="KW-0963">Cytoplasm</keyword>
<keyword id="KW-0350">Heme biosynthesis</keyword>
<keyword id="KW-0408">Iron</keyword>
<keyword id="KW-0456">Lyase</keyword>
<keyword id="KW-0479">Metal-binding</keyword>
<keyword id="KW-0627">Porphyrin biosynthesis</keyword>
<evidence type="ECO:0000255" key="1">
    <source>
        <dbReference type="HAMAP-Rule" id="MF_00323"/>
    </source>
</evidence>
<dbReference type="EC" id="4.98.1.1" evidence="1"/>
<dbReference type="EMBL" id="CU928160">
    <property type="protein sequence ID" value="CAQ97350.1"/>
    <property type="molecule type" value="Genomic_DNA"/>
</dbReference>
<dbReference type="RefSeq" id="WP_001250120.1">
    <property type="nucleotide sequence ID" value="NC_011741.1"/>
</dbReference>
<dbReference type="SMR" id="B7M3W7"/>
<dbReference type="GeneID" id="75203141"/>
<dbReference type="KEGG" id="ecr:ECIAI1_0478"/>
<dbReference type="HOGENOM" id="CLU_018884_0_0_6"/>
<dbReference type="UniPathway" id="UPA00252">
    <property type="reaction ID" value="UER00325"/>
</dbReference>
<dbReference type="GO" id="GO:0005737">
    <property type="term" value="C:cytoplasm"/>
    <property type="evidence" value="ECO:0007669"/>
    <property type="project" value="UniProtKB-SubCell"/>
</dbReference>
<dbReference type="GO" id="GO:0004325">
    <property type="term" value="F:ferrochelatase activity"/>
    <property type="evidence" value="ECO:0007669"/>
    <property type="project" value="UniProtKB-UniRule"/>
</dbReference>
<dbReference type="GO" id="GO:0046872">
    <property type="term" value="F:metal ion binding"/>
    <property type="evidence" value="ECO:0007669"/>
    <property type="project" value="UniProtKB-KW"/>
</dbReference>
<dbReference type="GO" id="GO:0006783">
    <property type="term" value="P:heme biosynthetic process"/>
    <property type="evidence" value="ECO:0007669"/>
    <property type="project" value="UniProtKB-UniRule"/>
</dbReference>
<dbReference type="CDD" id="cd00419">
    <property type="entry name" value="Ferrochelatase_C"/>
    <property type="match status" value="1"/>
</dbReference>
<dbReference type="CDD" id="cd03411">
    <property type="entry name" value="Ferrochelatase_N"/>
    <property type="match status" value="1"/>
</dbReference>
<dbReference type="FunFam" id="3.40.50.1400:FF:000004">
    <property type="entry name" value="Ferrochelatase"/>
    <property type="match status" value="1"/>
</dbReference>
<dbReference type="Gene3D" id="3.40.50.1400">
    <property type="match status" value="2"/>
</dbReference>
<dbReference type="HAMAP" id="MF_00323">
    <property type="entry name" value="Ferrochelatase"/>
    <property type="match status" value="1"/>
</dbReference>
<dbReference type="InterPro" id="IPR001015">
    <property type="entry name" value="Ferrochelatase"/>
</dbReference>
<dbReference type="InterPro" id="IPR019772">
    <property type="entry name" value="Ferrochelatase_AS"/>
</dbReference>
<dbReference type="InterPro" id="IPR033644">
    <property type="entry name" value="Ferrochelatase_C"/>
</dbReference>
<dbReference type="InterPro" id="IPR033659">
    <property type="entry name" value="Ferrochelatase_N"/>
</dbReference>
<dbReference type="NCBIfam" id="TIGR00109">
    <property type="entry name" value="hemH"/>
    <property type="match status" value="1"/>
</dbReference>
<dbReference type="PANTHER" id="PTHR11108">
    <property type="entry name" value="FERROCHELATASE"/>
    <property type="match status" value="1"/>
</dbReference>
<dbReference type="PANTHER" id="PTHR11108:SF1">
    <property type="entry name" value="FERROCHELATASE, MITOCHONDRIAL"/>
    <property type="match status" value="1"/>
</dbReference>
<dbReference type="Pfam" id="PF00762">
    <property type="entry name" value="Ferrochelatase"/>
    <property type="match status" value="1"/>
</dbReference>
<dbReference type="SUPFAM" id="SSF53800">
    <property type="entry name" value="Chelatase"/>
    <property type="match status" value="1"/>
</dbReference>
<dbReference type="PROSITE" id="PS00534">
    <property type="entry name" value="FERROCHELATASE"/>
    <property type="match status" value="1"/>
</dbReference>
<proteinExistence type="inferred from homology"/>
<organism>
    <name type="scientific">Escherichia coli O8 (strain IAI1)</name>
    <dbReference type="NCBI Taxonomy" id="585034"/>
    <lineage>
        <taxon>Bacteria</taxon>
        <taxon>Pseudomonadati</taxon>
        <taxon>Pseudomonadota</taxon>
        <taxon>Gammaproteobacteria</taxon>
        <taxon>Enterobacterales</taxon>
        <taxon>Enterobacteriaceae</taxon>
        <taxon>Escherichia</taxon>
    </lineage>
</organism>
<sequence>MRQTKTGILLANLGTPDAPTPEAVKRYLKQFLSDRRVVDTSRLLWWPLLRGVILPLRSPRVAKLYASVWMEGGSPLMVYSRQQQQALAQRLPETPVALGMSYGSPSLESAVNELLAEHVDHIVVLPLYPQFSCSTVGAVWDELARILARKRSIPGISFIRDYADNHDYINALANSVRASFAKHGEPDLLLLSYHGIPQRYADEGDDYPQRCRTTTRELASALGMAPEKVMMTFQSRFGREPWLMPYTDETLKMLGEKGVGHIQVMCPGFAADCLETLEEIAEQNREVFLGAGGKKYEYIPALNATPEHIEMMANLVAAYR</sequence>